<reference key="1">
    <citation type="journal article" date="1996" name="Science">
        <title>Complete genome sequence of the methanogenic archaeon, Methanococcus jannaschii.</title>
        <authorList>
            <person name="Bult C.J."/>
            <person name="White O."/>
            <person name="Olsen G.J."/>
            <person name="Zhou L."/>
            <person name="Fleischmann R.D."/>
            <person name="Sutton G.G."/>
            <person name="Blake J.A."/>
            <person name="FitzGerald L.M."/>
            <person name="Clayton R.A."/>
            <person name="Gocayne J.D."/>
            <person name="Kerlavage A.R."/>
            <person name="Dougherty B.A."/>
            <person name="Tomb J.-F."/>
            <person name="Adams M.D."/>
            <person name="Reich C.I."/>
            <person name="Overbeek R."/>
            <person name="Kirkness E.F."/>
            <person name="Weinstock K.G."/>
            <person name="Merrick J.M."/>
            <person name="Glodek A."/>
            <person name="Scott J.L."/>
            <person name="Geoghagen N.S.M."/>
            <person name="Weidman J.F."/>
            <person name="Fuhrmann J.L."/>
            <person name="Nguyen D."/>
            <person name="Utterback T.R."/>
            <person name="Kelley J.M."/>
            <person name="Peterson J.D."/>
            <person name="Sadow P.W."/>
            <person name="Hanna M.C."/>
            <person name="Cotton M.D."/>
            <person name="Roberts K.M."/>
            <person name="Hurst M.A."/>
            <person name="Kaine B.P."/>
            <person name="Borodovsky M."/>
            <person name="Klenk H.-P."/>
            <person name="Fraser C.M."/>
            <person name="Smith H.O."/>
            <person name="Woese C.R."/>
            <person name="Venter J.C."/>
        </authorList>
    </citation>
    <scope>NUCLEOTIDE SEQUENCE [LARGE SCALE GENOMIC DNA]</scope>
    <source>
        <strain>ATCC 43067 / DSM 2661 / JAL-1 / JCM 10045 / NBRC 100440</strain>
    </source>
</reference>
<dbReference type="EC" id="4.6.1.1"/>
<dbReference type="EMBL" id="L77117">
    <property type="protein sequence ID" value="AAB98225.1"/>
    <property type="molecule type" value="Genomic_DNA"/>
</dbReference>
<dbReference type="PIR" id="A64330">
    <property type="entry name" value="A64330"/>
</dbReference>
<dbReference type="RefSeq" id="WP_010869738.1">
    <property type="nucleotide sequence ID" value="NC_000909.1"/>
</dbReference>
<dbReference type="SMR" id="Q57692"/>
<dbReference type="STRING" id="243232.MJ_0240"/>
<dbReference type="PaxDb" id="243232-MJ_0240"/>
<dbReference type="EnsemblBacteria" id="AAB98225">
    <property type="protein sequence ID" value="AAB98225"/>
    <property type="gene ID" value="MJ_0240"/>
</dbReference>
<dbReference type="GeneID" id="1451094"/>
<dbReference type="KEGG" id="mja:MJ_0240"/>
<dbReference type="eggNOG" id="arCOG01723">
    <property type="taxonomic scope" value="Archaea"/>
</dbReference>
<dbReference type="HOGENOM" id="CLU_105244_2_0_2"/>
<dbReference type="InParanoid" id="Q57692"/>
<dbReference type="OrthoDB" id="46040at2157"/>
<dbReference type="PhylomeDB" id="Q57692"/>
<dbReference type="Proteomes" id="UP000000805">
    <property type="component" value="Chromosome"/>
</dbReference>
<dbReference type="GO" id="GO:0005737">
    <property type="term" value="C:cytoplasm"/>
    <property type="evidence" value="ECO:0007669"/>
    <property type="project" value="UniProtKB-SubCell"/>
</dbReference>
<dbReference type="GO" id="GO:0004016">
    <property type="term" value="F:adenylate cyclase activity"/>
    <property type="evidence" value="ECO:0000250"/>
    <property type="project" value="UniProtKB"/>
</dbReference>
<dbReference type="GO" id="GO:0005524">
    <property type="term" value="F:ATP binding"/>
    <property type="evidence" value="ECO:0007669"/>
    <property type="project" value="UniProtKB-KW"/>
</dbReference>
<dbReference type="GO" id="GO:0006171">
    <property type="term" value="P:cAMP biosynthetic process"/>
    <property type="evidence" value="ECO:0007669"/>
    <property type="project" value="UniProtKB-KW"/>
</dbReference>
<dbReference type="CDD" id="cd07890">
    <property type="entry name" value="CYTH-like_AC_IV-like"/>
    <property type="match status" value="1"/>
</dbReference>
<dbReference type="Gene3D" id="2.40.320.10">
    <property type="entry name" value="Hypothetical Protein Pfu-838710-001"/>
    <property type="match status" value="1"/>
</dbReference>
<dbReference type="InterPro" id="IPR008173">
    <property type="entry name" value="Adenylyl_cyclase_CyaB"/>
</dbReference>
<dbReference type="InterPro" id="IPR033469">
    <property type="entry name" value="CYTH-like_dom_sf"/>
</dbReference>
<dbReference type="InterPro" id="IPR023577">
    <property type="entry name" value="CYTH_domain"/>
</dbReference>
<dbReference type="NCBIfam" id="TIGR00318">
    <property type="entry name" value="cyaB"/>
    <property type="match status" value="1"/>
</dbReference>
<dbReference type="PANTHER" id="PTHR21028:SF2">
    <property type="entry name" value="CYTH DOMAIN-CONTAINING PROTEIN"/>
    <property type="match status" value="1"/>
</dbReference>
<dbReference type="PANTHER" id="PTHR21028">
    <property type="entry name" value="SI:CH211-156B7.4"/>
    <property type="match status" value="1"/>
</dbReference>
<dbReference type="Pfam" id="PF01928">
    <property type="entry name" value="CYTH"/>
    <property type="match status" value="1"/>
</dbReference>
<dbReference type="SMART" id="SM01118">
    <property type="entry name" value="CYTH"/>
    <property type="match status" value="1"/>
</dbReference>
<dbReference type="SUPFAM" id="SSF55154">
    <property type="entry name" value="CYTH-like phosphatases"/>
    <property type="match status" value="1"/>
</dbReference>
<dbReference type="PROSITE" id="PS51707">
    <property type="entry name" value="CYTH"/>
    <property type="match status" value="1"/>
</dbReference>
<keyword id="KW-0067">ATP-binding</keyword>
<keyword id="KW-0115">cAMP biosynthesis</keyword>
<keyword id="KW-0963">Cytoplasm</keyword>
<keyword id="KW-0456">Lyase</keyword>
<keyword id="KW-0547">Nucleotide-binding</keyword>
<keyword id="KW-1185">Reference proteome</keyword>
<protein>
    <recommendedName>
        <fullName>Putative adenylate cyclase MJ0240</fullName>
        <ecNumber>4.6.1.1</ecNumber>
    </recommendedName>
    <alternativeName>
        <fullName>ATP pyrophosphate-lyase</fullName>
    </alternativeName>
    <alternativeName>
        <fullName>Adenylyl cyclase</fullName>
    </alternativeName>
</protein>
<feature type="chain" id="PRO_0000106757" description="Putative adenylate cyclase MJ0240">
    <location>
        <begin position="1"/>
        <end position="175"/>
    </location>
</feature>
<feature type="domain" description="CYTH" evidence="2">
    <location>
        <begin position="1"/>
        <end position="175"/>
    </location>
</feature>
<feature type="active site" description="Proton acceptor" evidence="1">
    <location>
        <position position="37"/>
    </location>
</feature>
<accession>Q57692</accession>
<proteinExistence type="inferred from homology"/>
<evidence type="ECO:0000250" key="1"/>
<evidence type="ECO:0000255" key="2">
    <source>
        <dbReference type="PROSITE-ProRule" id="PRU01044"/>
    </source>
</evidence>
<evidence type="ECO:0000305" key="3"/>
<gene>
    <name type="ordered locus">MJ0240</name>
</gene>
<comment type="function">
    <text evidence="1">Could catalyze the biosynthesis of cyclic AMP (cAMP) from ATP.</text>
</comment>
<comment type="catalytic activity">
    <reaction>
        <text>ATP = 3',5'-cyclic AMP + diphosphate</text>
        <dbReference type="Rhea" id="RHEA:15389"/>
        <dbReference type="ChEBI" id="CHEBI:30616"/>
        <dbReference type="ChEBI" id="CHEBI:33019"/>
        <dbReference type="ChEBI" id="CHEBI:58165"/>
        <dbReference type="EC" id="4.6.1.1"/>
    </reaction>
</comment>
<comment type="subcellular location">
    <subcellularLocation>
        <location evidence="1">Cytoplasm</location>
    </subcellularLocation>
</comment>
<comment type="similarity">
    <text evidence="3">Belongs to the adenylyl cyclase CyaB family.</text>
</comment>
<organism>
    <name type="scientific">Methanocaldococcus jannaschii (strain ATCC 43067 / DSM 2661 / JAL-1 / JCM 10045 / NBRC 100440)</name>
    <name type="common">Methanococcus jannaschii</name>
    <dbReference type="NCBI Taxonomy" id="243232"/>
    <lineage>
        <taxon>Archaea</taxon>
        <taxon>Methanobacteriati</taxon>
        <taxon>Methanobacteriota</taxon>
        <taxon>Methanomada group</taxon>
        <taxon>Methanococci</taxon>
        <taxon>Methanococcales</taxon>
        <taxon>Methanocaldococcaceae</taxon>
        <taxon>Methanocaldococcus</taxon>
    </lineage>
</organism>
<name>Y240_METJA</name>
<sequence>MIEVEIKVKIDDKNKVVEQLKKLGFKFIKKKFQEDIYFNGIDRDFRETDEALRIRDEDGNFFVTYKGPKIDKISKTREEIEVKIEDKEKMRQIFKKLGFKEVPPIRKIREIYKKEDIEASIDDVEGLGLFLELEKSISDINEKDKVLEEMMEILKALNISKDNIIRKSYLELRGL</sequence>